<name>YDIB_ECOLU</name>
<dbReference type="EC" id="1.1.1.282" evidence="1"/>
<dbReference type="EMBL" id="CU928163">
    <property type="protein sequence ID" value="CAR13177.1"/>
    <property type="molecule type" value="Genomic_DNA"/>
</dbReference>
<dbReference type="RefSeq" id="WP_000383491.1">
    <property type="nucleotide sequence ID" value="NC_011751.1"/>
</dbReference>
<dbReference type="RefSeq" id="YP_002412709.1">
    <property type="nucleotide sequence ID" value="NC_011751.1"/>
</dbReference>
<dbReference type="SMR" id="B7N528"/>
<dbReference type="STRING" id="585056.ECUMN_1981"/>
<dbReference type="KEGG" id="eum:ECUMN_1981"/>
<dbReference type="PATRIC" id="fig|585056.7.peg.2167"/>
<dbReference type="HOGENOM" id="CLU_044063_4_4_6"/>
<dbReference type="UniPathway" id="UPA00053">
    <property type="reaction ID" value="UER00087"/>
</dbReference>
<dbReference type="Proteomes" id="UP000007097">
    <property type="component" value="Chromosome"/>
</dbReference>
<dbReference type="GO" id="GO:0030266">
    <property type="term" value="F:quinate 3-dehydrogenase (NAD+) activity"/>
    <property type="evidence" value="ECO:0007669"/>
    <property type="project" value="UniProtKB-UniRule"/>
</dbReference>
<dbReference type="GO" id="GO:0052733">
    <property type="term" value="F:quinate 3-dehydrogenase (NADP+) activity"/>
    <property type="evidence" value="ECO:0007669"/>
    <property type="project" value="InterPro"/>
</dbReference>
<dbReference type="GO" id="GO:0052734">
    <property type="term" value="F:shikimate 3-dehydrogenase (NAD+) activity"/>
    <property type="evidence" value="ECO:0007669"/>
    <property type="project" value="InterPro"/>
</dbReference>
<dbReference type="GO" id="GO:0004764">
    <property type="term" value="F:shikimate 3-dehydrogenase (NADP+) activity"/>
    <property type="evidence" value="ECO:0007669"/>
    <property type="project" value="UniProtKB-UniRule"/>
</dbReference>
<dbReference type="GO" id="GO:0008652">
    <property type="term" value="P:amino acid biosynthetic process"/>
    <property type="evidence" value="ECO:0007669"/>
    <property type="project" value="UniProtKB-KW"/>
</dbReference>
<dbReference type="GO" id="GO:0009073">
    <property type="term" value="P:aromatic amino acid family biosynthetic process"/>
    <property type="evidence" value="ECO:0007669"/>
    <property type="project" value="UniProtKB-KW"/>
</dbReference>
<dbReference type="GO" id="GO:0009423">
    <property type="term" value="P:chorismate biosynthetic process"/>
    <property type="evidence" value="ECO:0007669"/>
    <property type="project" value="UniProtKB-UniRule"/>
</dbReference>
<dbReference type="GO" id="GO:0019632">
    <property type="term" value="P:shikimate metabolic process"/>
    <property type="evidence" value="ECO:0007669"/>
    <property type="project" value="TreeGrafter"/>
</dbReference>
<dbReference type="CDD" id="cd01065">
    <property type="entry name" value="NAD_bind_Shikimate_DH"/>
    <property type="match status" value="1"/>
</dbReference>
<dbReference type="FunFam" id="3.40.50.10860:FF:000004">
    <property type="entry name" value="Quinate/shikimate dehydrogenase"/>
    <property type="match status" value="1"/>
</dbReference>
<dbReference type="FunFam" id="3.40.50.720:FF:000086">
    <property type="entry name" value="Quinate/shikimate dehydrogenase"/>
    <property type="match status" value="1"/>
</dbReference>
<dbReference type="Gene3D" id="3.40.50.10860">
    <property type="entry name" value="Leucine Dehydrogenase, chain A, domain 1"/>
    <property type="match status" value="1"/>
</dbReference>
<dbReference type="Gene3D" id="3.40.50.720">
    <property type="entry name" value="NAD(P)-binding Rossmann-like Domain"/>
    <property type="match status" value="1"/>
</dbReference>
<dbReference type="HAMAP" id="MF_00222">
    <property type="entry name" value="Shikimate_DH_AroE"/>
    <property type="match status" value="1"/>
</dbReference>
<dbReference type="HAMAP" id="MF_01578">
    <property type="entry name" value="Shikimate_DH_YdiB"/>
    <property type="match status" value="1"/>
</dbReference>
<dbReference type="InterPro" id="IPR046346">
    <property type="entry name" value="Aminoacid_DH-like_N_sf"/>
</dbReference>
<dbReference type="InterPro" id="IPR036291">
    <property type="entry name" value="NAD(P)-bd_dom_sf"/>
</dbReference>
<dbReference type="InterPro" id="IPR022872">
    <property type="entry name" value="Quinate/Shikimate_DH"/>
</dbReference>
<dbReference type="InterPro" id="IPR041121">
    <property type="entry name" value="SDH_C"/>
</dbReference>
<dbReference type="InterPro" id="IPR013708">
    <property type="entry name" value="Shikimate_DH-bd_N"/>
</dbReference>
<dbReference type="InterPro" id="IPR022893">
    <property type="entry name" value="Shikimate_DH_fam"/>
</dbReference>
<dbReference type="NCBIfam" id="NF009390">
    <property type="entry name" value="PRK12749.1"/>
    <property type="match status" value="1"/>
</dbReference>
<dbReference type="PANTHER" id="PTHR21089:SF1">
    <property type="entry name" value="BIFUNCTIONAL 3-DEHYDROQUINATE DEHYDRATASE_SHIKIMATE DEHYDROGENASE, CHLOROPLASTIC"/>
    <property type="match status" value="1"/>
</dbReference>
<dbReference type="PANTHER" id="PTHR21089">
    <property type="entry name" value="SHIKIMATE DEHYDROGENASE"/>
    <property type="match status" value="1"/>
</dbReference>
<dbReference type="Pfam" id="PF18317">
    <property type="entry name" value="SDH_C"/>
    <property type="match status" value="1"/>
</dbReference>
<dbReference type="Pfam" id="PF08501">
    <property type="entry name" value="Shikimate_dh_N"/>
    <property type="match status" value="1"/>
</dbReference>
<dbReference type="SUPFAM" id="SSF53223">
    <property type="entry name" value="Aminoacid dehydrogenase-like, N-terminal domain"/>
    <property type="match status" value="1"/>
</dbReference>
<dbReference type="SUPFAM" id="SSF51735">
    <property type="entry name" value="NAD(P)-binding Rossmann-fold domains"/>
    <property type="match status" value="1"/>
</dbReference>
<evidence type="ECO:0000255" key="1">
    <source>
        <dbReference type="HAMAP-Rule" id="MF_01578"/>
    </source>
</evidence>
<comment type="function">
    <text evidence="1">The actual biological function of YdiB remains unclear, nor is it known whether 3-dehydroshikimate or quinate represents the natural substrate. Catalyzes the reversible NAD-dependent reduction of both 3-dehydroshikimate (DHSA) and 3-dehydroquinate to yield shikimate (SA) and quinate, respectively. It can use both NAD or NADP for catalysis, however it has higher catalytic efficiency with NAD.</text>
</comment>
<comment type="catalytic activity">
    <reaction evidence="1">
        <text>L-quinate + NAD(+) = 3-dehydroquinate + NADH + H(+)</text>
        <dbReference type="Rhea" id="RHEA:22364"/>
        <dbReference type="ChEBI" id="CHEBI:15378"/>
        <dbReference type="ChEBI" id="CHEBI:29751"/>
        <dbReference type="ChEBI" id="CHEBI:32364"/>
        <dbReference type="ChEBI" id="CHEBI:57540"/>
        <dbReference type="ChEBI" id="CHEBI:57945"/>
        <dbReference type="EC" id="1.1.1.282"/>
    </reaction>
</comment>
<comment type="catalytic activity">
    <reaction evidence="1">
        <text>L-quinate + NADP(+) = 3-dehydroquinate + NADPH + H(+)</text>
        <dbReference type="Rhea" id="RHEA:18425"/>
        <dbReference type="ChEBI" id="CHEBI:15378"/>
        <dbReference type="ChEBI" id="CHEBI:29751"/>
        <dbReference type="ChEBI" id="CHEBI:32364"/>
        <dbReference type="ChEBI" id="CHEBI:57783"/>
        <dbReference type="ChEBI" id="CHEBI:58349"/>
        <dbReference type="EC" id="1.1.1.282"/>
    </reaction>
</comment>
<comment type="catalytic activity">
    <reaction evidence="1">
        <text>shikimate + NADP(+) = 3-dehydroshikimate + NADPH + H(+)</text>
        <dbReference type="Rhea" id="RHEA:17737"/>
        <dbReference type="ChEBI" id="CHEBI:15378"/>
        <dbReference type="ChEBI" id="CHEBI:16630"/>
        <dbReference type="ChEBI" id="CHEBI:36208"/>
        <dbReference type="ChEBI" id="CHEBI:57783"/>
        <dbReference type="ChEBI" id="CHEBI:58349"/>
        <dbReference type="EC" id="1.1.1.282"/>
    </reaction>
</comment>
<comment type="catalytic activity">
    <reaction evidence="1">
        <text>shikimate + NAD(+) = 3-dehydroshikimate + NADH + H(+)</text>
        <dbReference type="Rhea" id="RHEA:17741"/>
        <dbReference type="ChEBI" id="CHEBI:15378"/>
        <dbReference type="ChEBI" id="CHEBI:16630"/>
        <dbReference type="ChEBI" id="CHEBI:36208"/>
        <dbReference type="ChEBI" id="CHEBI:57540"/>
        <dbReference type="ChEBI" id="CHEBI:57945"/>
        <dbReference type="EC" id="1.1.1.282"/>
    </reaction>
</comment>
<comment type="pathway">
    <text evidence="1">Metabolic intermediate biosynthesis; chorismate biosynthesis; chorismate from D-erythrose 4-phosphate and phosphoenolpyruvate: step 4/7.</text>
</comment>
<comment type="subunit">
    <text evidence="1">Homodimer.</text>
</comment>
<comment type="similarity">
    <text evidence="1">Belongs to the shikimate dehydrogenase family.</text>
</comment>
<proteinExistence type="inferred from homology"/>
<protein>
    <recommendedName>
        <fullName evidence="1">Quinate/shikimate dehydrogenase</fullName>
        <ecNumber evidence="1">1.1.1.282</ecNumber>
    </recommendedName>
    <alternativeName>
        <fullName evidence="1">NAD-dependent shikimate 5-dehydrogenase</fullName>
    </alternativeName>
</protein>
<reference key="1">
    <citation type="journal article" date="2009" name="PLoS Genet.">
        <title>Organised genome dynamics in the Escherichia coli species results in highly diverse adaptive paths.</title>
        <authorList>
            <person name="Touchon M."/>
            <person name="Hoede C."/>
            <person name="Tenaillon O."/>
            <person name="Barbe V."/>
            <person name="Baeriswyl S."/>
            <person name="Bidet P."/>
            <person name="Bingen E."/>
            <person name="Bonacorsi S."/>
            <person name="Bouchier C."/>
            <person name="Bouvet O."/>
            <person name="Calteau A."/>
            <person name="Chiapello H."/>
            <person name="Clermont O."/>
            <person name="Cruveiller S."/>
            <person name="Danchin A."/>
            <person name="Diard M."/>
            <person name="Dossat C."/>
            <person name="Karoui M.E."/>
            <person name="Frapy E."/>
            <person name="Garry L."/>
            <person name="Ghigo J.M."/>
            <person name="Gilles A.M."/>
            <person name="Johnson J."/>
            <person name="Le Bouguenec C."/>
            <person name="Lescat M."/>
            <person name="Mangenot S."/>
            <person name="Martinez-Jehanne V."/>
            <person name="Matic I."/>
            <person name="Nassif X."/>
            <person name="Oztas S."/>
            <person name="Petit M.A."/>
            <person name="Pichon C."/>
            <person name="Rouy Z."/>
            <person name="Ruf C.S."/>
            <person name="Schneider D."/>
            <person name="Tourret J."/>
            <person name="Vacherie B."/>
            <person name="Vallenet D."/>
            <person name="Medigue C."/>
            <person name="Rocha E.P.C."/>
            <person name="Denamur E."/>
        </authorList>
    </citation>
    <scope>NUCLEOTIDE SEQUENCE [LARGE SCALE GENOMIC DNA]</scope>
    <source>
        <strain>UMN026 / ExPEC</strain>
    </source>
</reference>
<organism>
    <name type="scientific">Escherichia coli O17:K52:H18 (strain UMN026 / ExPEC)</name>
    <dbReference type="NCBI Taxonomy" id="585056"/>
    <lineage>
        <taxon>Bacteria</taxon>
        <taxon>Pseudomonadati</taxon>
        <taxon>Pseudomonadota</taxon>
        <taxon>Gammaproteobacteria</taxon>
        <taxon>Enterobacterales</taxon>
        <taxon>Enterobacteriaceae</taxon>
        <taxon>Escherichia</taxon>
    </lineage>
</organism>
<keyword id="KW-0028">Amino-acid biosynthesis</keyword>
<keyword id="KW-0057">Aromatic amino acid biosynthesis</keyword>
<keyword id="KW-0520">NAD</keyword>
<keyword id="KW-0521">NADP</keyword>
<keyword id="KW-0560">Oxidoreductase</keyword>
<gene>
    <name evidence="1" type="primary">ydiB</name>
    <name type="ordered locus">ECUMN_1981</name>
</gene>
<sequence>MDVTAKYELIGLMAYPIRHSLSPEMQNKALEKAGLSFTYMAFEVDNDSFPGAIEGLKALKMRGTGVSMPNKQLACEYVDELTPAAKLVGAINTIVNDDGYLRGYNTDGTGHIRAIKESGFDIKGKTMVLLGAGGASTAIGAQGAIEGLKEIKLFNRRDEFFDKALAFAQRVNENTDCVVTVTDLADQQAFAEALASADILTNGTKVGMKPLENESLVNDISLLHPGLLVTECVYNPHMTKLLQQAQQAGCKTIDGYGMLLWQGAEQFTLWTGKDFPLEYVKQVMGFGA</sequence>
<feature type="chain" id="PRO_1000147552" description="Quinate/shikimate dehydrogenase">
    <location>
        <begin position="1"/>
        <end position="288"/>
    </location>
</feature>
<feature type="binding site" evidence="1">
    <location>
        <position position="71"/>
    </location>
    <ligand>
        <name>substrate</name>
    </ligand>
</feature>
<feature type="binding site" evidence="1">
    <location>
        <position position="107"/>
    </location>
    <ligand>
        <name>substrate</name>
    </ligand>
</feature>
<feature type="binding site" evidence="1">
    <location>
        <begin position="132"/>
        <end position="135"/>
    </location>
    <ligand>
        <name>NAD(+)</name>
        <dbReference type="ChEBI" id="CHEBI:57540"/>
    </ligand>
</feature>
<feature type="binding site" evidence="1">
    <location>
        <begin position="155"/>
        <end position="158"/>
    </location>
    <ligand>
        <name>NAD(+)</name>
        <dbReference type="ChEBI" id="CHEBI:57540"/>
    </ligand>
</feature>
<feature type="binding site" evidence="1">
    <location>
        <position position="205"/>
    </location>
    <ligand>
        <name>NAD(+)</name>
        <dbReference type="ChEBI" id="CHEBI:57540"/>
    </ligand>
</feature>
<feature type="binding site" evidence="1">
    <location>
        <begin position="232"/>
        <end position="235"/>
    </location>
    <ligand>
        <name>NAD(+)</name>
        <dbReference type="ChEBI" id="CHEBI:57540"/>
    </ligand>
</feature>
<feature type="binding site" evidence="1">
    <location>
        <position position="255"/>
    </location>
    <ligand>
        <name>NAD(+)</name>
        <dbReference type="ChEBI" id="CHEBI:57540"/>
    </ligand>
</feature>
<accession>B7N528</accession>